<proteinExistence type="evidence at protein level"/>
<feature type="initiator methionine" description="Removed" evidence="34 35 36 37">
    <location>
        <position position="1"/>
    </location>
</feature>
<feature type="chain" id="PRO_0000168163" description="Reticulon-3">
    <location>
        <begin position="2"/>
        <end position="1032"/>
    </location>
</feature>
<feature type="topological domain" description="Cytoplasmic" evidence="3">
    <location>
        <begin position="2"/>
        <end position="863"/>
    </location>
</feature>
<feature type="intramembrane region" description="Helical" evidence="3">
    <location>
        <begin position="864"/>
        <end position="887"/>
    </location>
</feature>
<feature type="topological domain" description="Cytoplasmic" evidence="3">
    <location>
        <begin position="888"/>
        <end position="947"/>
    </location>
</feature>
<feature type="intramembrane region" description="Helical" evidence="3">
    <location>
        <begin position="948"/>
        <end position="968"/>
    </location>
</feature>
<feature type="topological domain" description="Cytoplasmic" evidence="3">
    <location>
        <begin position="969"/>
        <end position="972"/>
    </location>
</feature>
<feature type="intramembrane region" description="Helical" evidence="3">
    <location>
        <begin position="973"/>
        <end position="993"/>
    </location>
</feature>
<feature type="topological domain" description="Cytoplasmic" evidence="3">
    <location>
        <begin position="994"/>
        <end position="1032"/>
    </location>
</feature>
<feature type="domain" description="Reticulon" evidence="4">
    <location>
        <begin position="844"/>
        <end position="1032"/>
    </location>
</feature>
<feature type="region of interest" description="Disordered" evidence="5">
    <location>
        <begin position="1"/>
        <end position="61"/>
    </location>
</feature>
<feature type="region of interest" description="Disordered" evidence="5">
    <location>
        <begin position="545"/>
        <end position="617"/>
    </location>
</feature>
<feature type="region of interest" description="Disordered" evidence="5">
    <location>
        <begin position="696"/>
        <end position="726"/>
    </location>
</feature>
<feature type="region of interest" description="Interaction with FADD" evidence="14">
    <location>
        <begin position="987"/>
        <end position="1032"/>
    </location>
</feature>
<feature type="region of interest" description="Interaction with BACE1">
    <location>
        <begin position="1000"/>
        <end position="1002"/>
    </location>
</feature>
<feature type="compositionally biased region" description="Low complexity" evidence="5">
    <location>
        <begin position="1"/>
        <end position="24"/>
    </location>
</feature>
<feature type="compositionally biased region" description="Low complexity" evidence="5">
    <location>
        <begin position="32"/>
        <end position="61"/>
    </location>
</feature>
<feature type="compositionally biased region" description="Basic and acidic residues" evidence="5">
    <location>
        <begin position="545"/>
        <end position="568"/>
    </location>
</feature>
<feature type="compositionally biased region" description="Polar residues" evidence="5">
    <location>
        <begin position="605"/>
        <end position="617"/>
    </location>
</feature>
<feature type="compositionally biased region" description="Basic and acidic residues" evidence="5">
    <location>
        <begin position="696"/>
        <end position="715"/>
    </location>
</feature>
<feature type="modified residue" description="N-acetylalanine" evidence="34 35 36 37">
    <location>
        <position position="2"/>
    </location>
</feature>
<feature type="modified residue" description="Phosphoserine" evidence="38">
    <location>
        <position position="30"/>
    </location>
</feature>
<feature type="modified residue" description="Phosphoserine" evidence="38">
    <location>
        <position position="229"/>
    </location>
</feature>
<feature type="modified residue" description="Phosphoserine" evidence="2">
    <location>
        <position position="243"/>
    </location>
</feature>
<feature type="modified residue" description="Phosphoserine" evidence="38">
    <location>
        <position position="246"/>
    </location>
</feature>
<feature type="modified residue" description="Phosphoserine" evidence="1">
    <location>
        <position position="283"/>
    </location>
</feature>
<feature type="modified residue" description="Phosphoserine" evidence="38">
    <location>
        <position position="316"/>
    </location>
</feature>
<feature type="modified residue" description="Phosphoserine" evidence="38">
    <location>
        <position position="453"/>
    </location>
</feature>
<feature type="modified residue" description="Phosphoserine" evidence="33">
    <location>
        <position position="649"/>
    </location>
</feature>
<feature type="modified residue" description="Phosphoserine" evidence="33">
    <location>
        <position position="650"/>
    </location>
</feature>
<feature type="modified residue" description="Phosphoserine" evidence="2">
    <location>
        <position position="735"/>
    </location>
</feature>
<feature type="splice variant" id="VSP_045319" description="In isoform 6." evidence="25">
    <location>
        <begin position="48"/>
        <end position="843"/>
    </location>
</feature>
<feature type="splice variant" id="VSP_047008" description="In isoform 7." evidence="31">
    <location>
        <begin position="48"/>
        <end position="159"/>
    </location>
</feature>
<feature type="splice variant" id="VSP_023759" description="In isoform 2, isoform 3 and isoform 5." evidence="23 24 26 27 28 29 30">
    <location>
        <begin position="48"/>
        <end position="66"/>
    </location>
</feature>
<feature type="splice variant" id="VSP_023760" description="In isoform 3, isoform 4 and isoform 5." evidence="23 24 25 26 27 29 30">
    <location>
        <begin position="67"/>
        <end position="843"/>
    </location>
</feature>
<feature type="splice variant" id="VSP_045320" description="In isoform 6." evidence="25">
    <original>AYLDVDITLSSEAFHNYMNAAMVHINRALKLIIRLFLVEDLVDSLKLAVFMWLMTYVGAVFNGITLLILAELLIFSVPIVYEKYKTQIDHYVGIARDQTKSIVEKIQAKLPGIAKKKAE</original>
    <variation>PRLITMLASPEIRPSQLLKRSKQNSLESPKKRQNKYMETRNATVTKTPFNSYNVVTCTMKENTQCQLEPAFQAFFLIWCFLPSFPFNPQYQAQKLMD</variation>
    <location>
        <begin position="914"/>
        <end position="1032"/>
    </location>
</feature>
<feature type="splice variant" id="VSP_023761" description="In isoform 5." evidence="31">
    <original>TQIDHYVGIARDQTKSIVEKIQAKLPGIAKKKAE</original>
    <variation>DPSKTPWNRQKKGRISTWKPEMQQLLKHHLIVITSLLVL</variation>
    <location>
        <begin position="999"/>
        <end position="1032"/>
    </location>
</feature>
<feature type="sequence variant" id="VAR_031164" description="In dbSNP:rs11551944." evidence="10">
    <original>A</original>
    <variation>E</variation>
    <location>
        <position position="6"/>
    </location>
</feature>
<feature type="sequence variant" id="VAR_057713" description="In dbSNP:rs7936660.">
    <original>D</original>
    <variation>H</variation>
    <location>
        <position position="501"/>
    </location>
</feature>
<feature type="sequence conflict" description="In Ref. 4; BAD93008." evidence="31" ref="4">
    <original>A</original>
    <variation>V</variation>
    <location>
        <position position="871"/>
    </location>
</feature>
<feature type="helix" evidence="39">
    <location>
        <begin position="254"/>
        <end position="260"/>
    </location>
</feature>
<feature type="turn" evidence="39">
    <location>
        <begin position="261"/>
        <end position="263"/>
    </location>
</feature>
<keyword id="KW-0002">3D-structure</keyword>
<keyword id="KW-0007">Acetylation</keyword>
<keyword id="KW-0025">Alternative splicing</keyword>
<keyword id="KW-0053">Apoptosis</keyword>
<keyword id="KW-0256">Endoplasmic reticulum</keyword>
<keyword id="KW-0931">ER-Golgi transport</keyword>
<keyword id="KW-0333">Golgi apparatus</keyword>
<keyword id="KW-0945">Host-virus interaction</keyword>
<keyword id="KW-0472">Membrane</keyword>
<keyword id="KW-0597">Phosphoprotein</keyword>
<keyword id="KW-1267">Proteomics identification</keyword>
<keyword id="KW-1185">Reference proteome</keyword>
<keyword id="KW-0346">Stress response</keyword>
<keyword id="KW-0812">Transmembrane</keyword>
<keyword id="KW-1133">Transmembrane helix</keyword>
<keyword id="KW-0813">Transport</keyword>
<reference key="1">
    <citation type="journal article" date="1999" name="Genomics">
        <title>Cloning of a novel member of the reticulon gene family (RTN3): gene structure and chromosomal localization to 11q13.</title>
        <authorList>
            <person name="Moreira E.F."/>
            <person name="Jaworski C.J."/>
            <person name="Rodriguez I.R."/>
        </authorList>
    </citation>
    <scope>NUCLEOTIDE SEQUENCE [GENOMIC DNA / MRNA] (ISOFORM 3)</scope>
    <scope>TISSUE SPECIFICITY</scope>
    <source>
        <tissue>Retina</tissue>
    </source>
</reference>
<reference key="2">
    <citation type="journal article" date="2003" name="J. Cell. Physiol.">
        <title>Pro-apoptotic ASY/Nogo-B protein associates with ASYIP.</title>
        <authorList>
            <person name="Qi B."/>
            <person name="Qi Y."/>
            <person name="Watari A."/>
            <person name="Yoshioka N."/>
            <person name="Inoue H."/>
            <person name="Minemoto Y."/>
            <person name="Yamashita K."/>
            <person name="Sasagawa T."/>
            <person name="Yutsudo M."/>
        </authorList>
    </citation>
    <scope>NUCLEOTIDE SEQUENCE [MRNA] (ISOFORM 3)</scope>
    <scope>HOMODIMERIZATION</scope>
    <scope>INTERACTION WITH RTN4</scope>
    <scope>TISSUE SPECIFICITY</scope>
    <scope>SUBCELLULAR LOCATION</scope>
</reference>
<reference key="3">
    <citation type="journal article" date="2004" name="Clin. Neuropathol.">
        <title>Overexpression of human reticulon 3 (hRTN3) in astrocytoma.</title>
        <authorList>
            <person name="Huang X."/>
            <person name="Yang H."/>
            <person name="Zhou Y."/>
            <person name="Liu J."/>
            <person name="Yin B."/>
            <person name="Peng X."/>
            <person name="Qiang B."/>
            <person name="Yuan J."/>
        </authorList>
    </citation>
    <scope>NUCLEOTIDE SEQUENCE [MRNA] (ISOFORM 3)</scope>
    <scope>TISSUE SPECIFICITY</scope>
</reference>
<reference key="4">
    <citation type="journal article" date="2005" name="Brain Res. Mol. Brain Res.">
        <title>Identification of a new RTN3 transcript, RTN3-A1, and its distribution in adult mouse brain.</title>
        <authorList>
            <person name="Cai Y."/>
            <person name="Saiyin H."/>
            <person name="Lin Q."/>
            <person name="Zhang P."/>
            <person name="Tang L."/>
            <person name="Pan X."/>
            <person name="Yu L."/>
        </authorList>
    </citation>
    <scope>NUCLEOTIDE SEQUENCE [MRNA] (ISOFORMS 1 AND 2)</scope>
    <scope>TISSUE SPECIFICITY</scope>
    <scope>VARIANT GLU-6</scope>
    <source>
        <tissue>Brain</tissue>
    </source>
</reference>
<reference key="5">
    <citation type="journal article" date="2004" name="Nat. Genet.">
        <title>Complete sequencing and characterization of 21,243 full-length human cDNAs.</title>
        <authorList>
            <person name="Ota T."/>
            <person name="Suzuki Y."/>
            <person name="Nishikawa T."/>
            <person name="Otsuki T."/>
            <person name="Sugiyama T."/>
            <person name="Irie R."/>
            <person name="Wakamatsu A."/>
            <person name="Hayashi K."/>
            <person name="Sato H."/>
            <person name="Nagai K."/>
            <person name="Kimura K."/>
            <person name="Makita H."/>
            <person name="Sekine M."/>
            <person name="Obayashi M."/>
            <person name="Nishi T."/>
            <person name="Shibahara T."/>
            <person name="Tanaka T."/>
            <person name="Ishii S."/>
            <person name="Yamamoto J."/>
            <person name="Saito K."/>
            <person name="Kawai Y."/>
            <person name="Isono Y."/>
            <person name="Nakamura Y."/>
            <person name="Nagahari K."/>
            <person name="Murakami K."/>
            <person name="Yasuda T."/>
            <person name="Iwayanagi T."/>
            <person name="Wagatsuma M."/>
            <person name="Shiratori A."/>
            <person name="Sudo H."/>
            <person name="Hosoiri T."/>
            <person name="Kaku Y."/>
            <person name="Kodaira H."/>
            <person name="Kondo H."/>
            <person name="Sugawara M."/>
            <person name="Takahashi M."/>
            <person name="Kanda K."/>
            <person name="Yokoi T."/>
            <person name="Furuya T."/>
            <person name="Kikkawa E."/>
            <person name="Omura Y."/>
            <person name="Abe K."/>
            <person name="Kamihara K."/>
            <person name="Katsuta N."/>
            <person name="Sato K."/>
            <person name="Tanikawa M."/>
            <person name="Yamazaki M."/>
            <person name="Ninomiya K."/>
            <person name="Ishibashi T."/>
            <person name="Yamashita H."/>
            <person name="Murakawa K."/>
            <person name="Fujimori K."/>
            <person name="Tanai H."/>
            <person name="Kimata M."/>
            <person name="Watanabe M."/>
            <person name="Hiraoka S."/>
            <person name="Chiba Y."/>
            <person name="Ishida S."/>
            <person name="Ono Y."/>
            <person name="Takiguchi S."/>
            <person name="Watanabe S."/>
            <person name="Yosida M."/>
            <person name="Hotuta T."/>
            <person name="Kusano J."/>
            <person name="Kanehori K."/>
            <person name="Takahashi-Fujii A."/>
            <person name="Hara H."/>
            <person name="Tanase T.-O."/>
            <person name="Nomura Y."/>
            <person name="Togiya S."/>
            <person name="Komai F."/>
            <person name="Hara R."/>
            <person name="Takeuchi K."/>
            <person name="Arita M."/>
            <person name="Imose N."/>
            <person name="Musashino K."/>
            <person name="Yuuki H."/>
            <person name="Oshima A."/>
            <person name="Sasaki N."/>
            <person name="Aotsuka S."/>
            <person name="Yoshikawa Y."/>
            <person name="Matsunawa H."/>
            <person name="Ichihara T."/>
            <person name="Shiohata N."/>
            <person name="Sano S."/>
            <person name="Moriya S."/>
            <person name="Momiyama H."/>
            <person name="Satoh N."/>
            <person name="Takami S."/>
            <person name="Terashima Y."/>
            <person name="Suzuki O."/>
            <person name="Nakagawa S."/>
            <person name="Senoh A."/>
            <person name="Mizoguchi H."/>
            <person name="Goto Y."/>
            <person name="Shimizu F."/>
            <person name="Wakebe H."/>
            <person name="Hishigaki H."/>
            <person name="Watanabe T."/>
            <person name="Sugiyama A."/>
            <person name="Takemoto M."/>
            <person name="Kawakami B."/>
            <person name="Yamazaki M."/>
            <person name="Watanabe K."/>
            <person name="Kumagai A."/>
            <person name="Itakura S."/>
            <person name="Fukuzumi Y."/>
            <person name="Fujimori Y."/>
            <person name="Komiyama M."/>
            <person name="Tashiro H."/>
            <person name="Tanigami A."/>
            <person name="Fujiwara T."/>
            <person name="Ono T."/>
            <person name="Yamada K."/>
            <person name="Fujii Y."/>
            <person name="Ozaki K."/>
            <person name="Hirao M."/>
            <person name="Ohmori Y."/>
            <person name="Kawabata A."/>
            <person name="Hikiji T."/>
            <person name="Kobatake N."/>
            <person name="Inagaki H."/>
            <person name="Ikema Y."/>
            <person name="Okamoto S."/>
            <person name="Okitani R."/>
            <person name="Kawakami T."/>
            <person name="Noguchi S."/>
            <person name="Itoh T."/>
            <person name="Shigeta K."/>
            <person name="Senba T."/>
            <person name="Matsumura K."/>
            <person name="Nakajima Y."/>
            <person name="Mizuno T."/>
            <person name="Morinaga M."/>
            <person name="Sasaki M."/>
            <person name="Togashi T."/>
            <person name="Oyama M."/>
            <person name="Hata H."/>
            <person name="Watanabe M."/>
            <person name="Komatsu T."/>
            <person name="Mizushima-Sugano J."/>
            <person name="Satoh T."/>
            <person name="Shirai Y."/>
            <person name="Takahashi Y."/>
            <person name="Nakagawa K."/>
            <person name="Okumura K."/>
            <person name="Nagase T."/>
            <person name="Nomura N."/>
            <person name="Kikuchi H."/>
            <person name="Masuho Y."/>
            <person name="Yamashita R."/>
            <person name="Nakai K."/>
            <person name="Yada T."/>
            <person name="Nakamura Y."/>
            <person name="Ohara O."/>
            <person name="Isogai T."/>
            <person name="Sugano S."/>
        </authorList>
    </citation>
    <scope>NUCLEOTIDE SEQUENCE [LARGE SCALE MRNA] (ISOFORMS 4 AND 6)</scope>
    <source>
        <tissue>Brain</tissue>
        <tissue>Corpus callosum</tissue>
    </source>
</reference>
<reference key="6">
    <citation type="submission" date="2005-04" db="EMBL/GenBank/DDBJ databases">
        <authorList>
            <person name="Suzuki Y."/>
            <person name="Sugano S."/>
            <person name="Totoki Y."/>
            <person name="Toyoda A."/>
            <person name="Takeda T."/>
            <person name="Sakaki Y."/>
            <person name="Tanaka A."/>
            <person name="Yokoyama S."/>
        </authorList>
    </citation>
    <scope>NUCLEOTIDE SEQUENCE [LARGE SCALE MRNA] (ISOFORM 3)</scope>
    <source>
        <tissue>Kidney</tissue>
    </source>
</reference>
<reference key="7">
    <citation type="journal article" date="2005" name="DNA Res.">
        <title>Signal sequence and keyword trap in silico for selection of full-length human cDNAs encoding secretion or membrane proteins from oligo-capped cDNA libraries.</title>
        <authorList>
            <person name="Otsuki T."/>
            <person name="Ota T."/>
            <person name="Nishikawa T."/>
            <person name="Hayashi K."/>
            <person name="Suzuki Y."/>
            <person name="Yamamoto J."/>
            <person name="Wakamatsu A."/>
            <person name="Kimura K."/>
            <person name="Sakamoto K."/>
            <person name="Hatano N."/>
            <person name="Kawai Y."/>
            <person name="Ishii S."/>
            <person name="Saito K."/>
            <person name="Kojima S."/>
            <person name="Sugiyama T."/>
            <person name="Ono T."/>
            <person name="Okano K."/>
            <person name="Yoshikawa Y."/>
            <person name="Aotsuka S."/>
            <person name="Sasaki N."/>
            <person name="Hattori A."/>
            <person name="Okumura K."/>
            <person name="Nagai K."/>
            <person name="Sugano S."/>
            <person name="Isogai T."/>
        </authorList>
    </citation>
    <scope>NUCLEOTIDE SEQUENCE [LARGE SCALE MRNA] (ISOFORM 3)</scope>
</reference>
<reference key="8">
    <citation type="journal article" date="2006" name="Nature">
        <title>Human chromosome 11 DNA sequence and analysis including novel gene identification.</title>
        <authorList>
            <person name="Taylor T.D."/>
            <person name="Noguchi H."/>
            <person name="Totoki Y."/>
            <person name="Toyoda A."/>
            <person name="Kuroki Y."/>
            <person name="Dewar K."/>
            <person name="Lloyd C."/>
            <person name="Itoh T."/>
            <person name="Takeda T."/>
            <person name="Kim D.-W."/>
            <person name="She X."/>
            <person name="Barlow K.F."/>
            <person name="Bloom T."/>
            <person name="Bruford E."/>
            <person name="Chang J.L."/>
            <person name="Cuomo C.A."/>
            <person name="Eichler E."/>
            <person name="FitzGerald M.G."/>
            <person name="Jaffe D.B."/>
            <person name="LaButti K."/>
            <person name="Nicol R."/>
            <person name="Park H.-S."/>
            <person name="Seaman C."/>
            <person name="Sougnez C."/>
            <person name="Yang X."/>
            <person name="Zimmer A.R."/>
            <person name="Zody M.C."/>
            <person name="Birren B.W."/>
            <person name="Nusbaum C."/>
            <person name="Fujiyama A."/>
            <person name="Hattori M."/>
            <person name="Rogers J."/>
            <person name="Lander E.S."/>
            <person name="Sakaki Y."/>
        </authorList>
    </citation>
    <scope>NUCLEOTIDE SEQUENCE [LARGE SCALE GENOMIC DNA]</scope>
</reference>
<reference key="9">
    <citation type="submission" date="2005-07" db="EMBL/GenBank/DDBJ databases">
        <authorList>
            <person name="Mural R.J."/>
            <person name="Istrail S."/>
            <person name="Sutton G.G."/>
            <person name="Florea L."/>
            <person name="Halpern A.L."/>
            <person name="Mobarry C.M."/>
            <person name="Lippert R."/>
            <person name="Walenz B."/>
            <person name="Shatkay H."/>
            <person name="Dew I."/>
            <person name="Miller J.R."/>
            <person name="Flanigan M.J."/>
            <person name="Edwards N.J."/>
            <person name="Bolanos R."/>
            <person name="Fasulo D."/>
            <person name="Halldorsson B.V."/>
            <person name="Hannenhalli S."/>
            <person name="Turner R."/>
            <person name="Yooseph S."/>
            <person name="Lu F."/>
            <person name="Nusskern D.R."/>
            <person name="Shue B.C."/>
            <person name="Zheng X.H."/>
            <person name="Zhong F."/>
            <person name="Delcher A.L."/>
            <person name="Huson D.H."/>
            <person name="Kravitz S.A."/>
            <person name="Mouchard L."/>
            <person name="Reinert K."/>
            <person name="Remington K.A."/>
            <person name="Clark A.G."/>
            <person name="Waterman M.S."/>
            <person name="Eichler E.E."/>
            <person name="Adams M.D."/>
            <person name="Hunkapiller M.W."/>
            <person name="Myers E.W."/>
            <person name="Venter J.C."/>
        </authorList>
    </citation>
    <scope>NUCLEOTIDE SEQUENCE [LARGE SCALE GENOMIC DNA]</scope>
</reference>
<reference key="10">
    <citation type="journal article" date="2004" name="Genome Res.">
        <title>The status, quality, and expansion of the NIH full-length cDNA project: the Mammalian Gene Collection (MGC).</title>
        <authorList>
            <consortium name="The MGC Project Team"/>
        </authorList>
    </citation>
    <scope>NUCLEOTIDE SEQUENCE [LARGE SCALE MRNA] (ISOFORM 3)</scope>
    <source>
        <tissue>Brain</tissue>
        <tissue>Eye</tissue>
        <tissue>Lymph</tissue>
    </source>
</reference>
<reference key="11">
    <citation type="journal article" date="2003" name="FASEB J.">
        <title>A reticular rhapsody: phylogenic evolution and nomenclature of the RTN/Nogo gene family.</title>
        <authorList>
            <person name="Oertle T."/>
            <person name="Klinger M."/>
            <person name="Stuermer C.A.O."/>
            <person name="Schwab M.E."/>
        </authorList>
    </citation>
    <scope>IDENTIFICATION (ISOFORMS 3; 4 AND 5)</scope>
</reference>
<reference key="12">
    <citation type="journal article" date="2004" name="Nat. Med.">
        <title>Reticulon family members modulate BACE1 activity and amyloid-beta peptide generation.</title>
        <authorList>
            <person name="He W."/>
            <person name="Lu Y."/>
            <person name="Qahwash I."/>
            <person name="Hu X.-Y."/>
            <person name="Chang A."/>
            <person name="Yan R."/>
        </authorList>
    </citation>
    <scope>INTERACTION WITH BACE1</scope>
    <scope>TISSUE SPECIFICITY</scope>
    <scope>SUBCELLULAR LOCATION</scope>
    <scope>FUNCTION</scope>
</reference>
<reference key="13">
    <citation type="journal article" date="2005" name="Biochem. Biophys. Res. Commun.">
        <title>Reticulon 3 is involved in membrane trafficking between the endoplasmic reticulum and Golgi.</title>
        <authorList>
            <person name="Wakana Y."/>
            <person name="Koyama S."/>
            <person name="Nakajima K."/>
            <person name="Hatsuzawa K."/>
            <person name="Nagahama M."/>
            <person name="Tani K."/>
            <person name="Hauri H.-P."/>
            <person name="Melancon P."/>
            <person name="Tagaya M."/>
        </authorList>
    </citation>
    <scope>HOMODIMERIZATION</scope>
    <scope>SUBCELLULAR LOCATION</scope>
    <scope>FUNCTION</scope>
</reference>
<reference key="14">
    <citation type="journal article" date="2005" name="Biochem. J.">
        <title>Tissue specificity and regulation of the N-terminal diversity of reticulon 3.</title>
        <authorList>
            <person name="Di Scala F."/>
            <person name="Dupuis L."/>
            <person name="Gaiddon C."/>
            <person name="De Tapia M."/>
            <person name="Jokic N."/>
            <person name="Gonzalez de Aguilar J.-L."/>
            <person name="Raul J.-S."/>
            <person name="Ludes B."/>
            <person name="Loeffler J.-P."/>
        </authorList>
    </citation>
    <scope>ALTERNATIVE SPLICING (ISOFORMS 1; 2; 3 AND 4)</scope>
</reference>
<reference key="15">
    <citation type="journal article" date="2006" name="Apoptosis">
        <title>Adaptor FADD is recruited by RTN3/HAP in ER-bound signaling complexes.</title>
        <authorList>
            <person name="Xiang R."/>
            <person name="Liu Y."/>
            <person name="Zhu L."/>
            <person name="Dong W."/>
            <person name="Qi Y."/>
        </authorList>
    </citation>
    <scope>INTERACTION WITH FADD</scope>
    <scope>SUBCELLULAR LOCATION</scope>
    <scope>FUNCTION</scope>
</reference>
<reference key="16">
    <citation type="journal article" date="2006" name="Cell">
        <title>Global, in vivo, and site-specific phosphorylation dynamics in signaling networks.</title>
        <authorList>
            <person name="Olsen J.V."/>
            <person name="Blagoev B."/>
            <person name="Gnad F."/>
            <person name="Macek B."/>
            <person name="Kumar C."/>
            <person name="Mortensen P."/>
            <person name="Mann M."/>
        </authorList>
    </citation>
    <scope>IDENTIFICATION BY MASS SPECTROMETRY [LARGE SCALE ANALYSIS]</scope>
    <source>
        <tissue>Cervix carcinoma</tissue>
    </source>
</reference>
<reference key="17">
    <citation type="journal article" date="2006" name="Eur. J. Neurosci.">
        <title>Reticulons RTN3 and RTN4-B/C interact with BACE1 and inhibit its ability to produce amyloid beta-protein.</title>
        <authorList>
            <person name="Murayama K.S."/>
            <person name="Kametani F."/>
            <person name="Saito S."/>
            <person name="Kume H."/>
            <person name="Akiyama H."/>
            <person name="Araki W."/>
        </authorList>
    </citation>
    <scope>INTERACTION WITH BACE1 AND BACE2</scope>
</reference>
<reference key="18">
    <citation type="journal article" date="2006" name="J. Mol. Biol.">
        <title>Mapping of interaction domains mediating binding between BACE1 and RTN/Nogo proteins.</title>
        <authorList>
            <person name="He W."/>
            <person name="Hu X."/>
            <person name="Shi Q."/>
            <person name="Zhou X."/>
            <person name="Lu Y."/>
            <person name="Fisher C."/>
            <person name="Yan R."/>
        </authorList>
    </citation>
    <scope>HOMODIMERIZATION</scope>
    <scope>INTERACTION WITH BACE1 AND RTN4</scope>
    <scope>SUBCELLULAR LOCATION</scope>
</reference>
<reference key="19">
    <citation type="journal article" date="2007" name="Apoptosis">
        <title>Reticulon 3 mediates Bcl-2 accumulation in mitochondria in response to endoplasmic reticulum stress.</title>
        <authorList>
            <person name="Wan Q."/>
            <person name="Kuang E."/>
            <person name="Dong W."/>
            <person name="Zhou S."/>
            <person name="Xu H."/>
            <person name="Qi Y."/>
            <person name="Liu Y."/>
        </authorList>
    </citation>
    <scope>INDUCTION BY ER STRESS</scope>
    <scope>INTERACTION WITH BCL2</scope>
    <scope>SUBCELLULAR LOCATION</scope>
    <scope>FUNCTION</scope>
</reference>
<reference key="20">
    <citation type="journal article" date="2007" name="J. Biol. Chem.">
        <title>Reticulon 3 binds the 2C protein of enterovirus 71 and is required for viral replication.</title>
        <authorList>
            <person name="Tang W.-F."/>
            <person name="Yang S.-Y."/>
            <person name="Wu B.-W."/>
            <person name="Jheng J.-R."/>
            <person name="Chen Y.-L."/>
            <person name="Shih C.-H."/>
            <person name="Lin K.-H."/>
            <person name="Lai H.-C."/>
            <person name="Tang P."/>
            <person name="Horng J.-T."/>
        </authorList>
    </citation>
    <scope>INTERACTION WITH POLIOVIRUS PROTEIN 2C (MICROBIAL INFECTION)</scope>
    <scope>INTERACTION WITH COXSACKIEVIRUS A16 PROTEIN 2C (MICROBIAL INFECTION)</scope>
    <scope>INTERACTION WITH HUMAN ENTEROVIRUS 71 PROTEIN 2C (MICROBIAL INFECTION)</scope>
    <scope>SUBCELLULAR LOCATION</scope>
    <scope>FUNCTION (MICROBIAL INFECTION)</scope>
</reference>
<reference key="21">
    <citation type="journal article" date="2007" name="J. Biol. Chem.">
        <title>The membrane topology of RTN3 and its effect on binding of RTN3 to BACE1.</title>
        <authorList>
            <person name="He W."/>
            <person name="Shi Q."/>
            <person name="Hu X."/>
            <person name="Yan R."/>
        </authorList>
    </citation>
    <scope>TOPOLOGY</scope>
</reference>
<reference key="22">
    <citation type="journal article" date="2008" name="Proc. Natl. Acad. Sci. U.S.A.">
        <title>A quantitative atlas of mitotic phosphorylation.</title>
        <authorList>
            <person name="Dephoure N."/>
            <person name="Zhou C."/>
            <person name="Villen J."/>
            <person name="Beausoleil S.A."/>
            <person name="Bakalarski C.E."/>
            <person name="Elledge S.J."/>
            <person name="Gygi S.P."/>
        </authorList>
    </citation>
    <scope>PHOSPHORYLATION [LARGE SCALE ANALYSIS] AT SER-649 AND SER-650</scope>
    <scope>IDENTIFICATION BY MASS SPECTROMETRY [LARGE SCALE ANALYSIS]</scope>
    <source>
        <tissue>Cervix carcinoma</tissue>
    </source>
</reference>
<reference key="23">
    <citation type="journal article" date="2009" name="Anal. Chem.">
        <title>Lys-N and trypsin cover complementary parts of the phosphoproteome in a refined SCX-based approach.</title>
        <authorList>
            <person name="Gauci S."/>
            <person name="Helbig A.O."/>
            <person name="Slijper M."/>
            <person name="Krijgsveld J."/>
            <person name="Heck A.J."/>
            <person name="Mohammed S."/>
        </authorList>
    </citation>
    <scope>ACETYLATION [LARGE SCALE ANALYSIS] AT ALA-2</scope>
    <scope>CLEAVAGE OF INITIATOR METHIONINE [LARGE SCALE ANALYSIS]</scope>
    <scope>IDENTIFICATION BY MASS SPECTROMETRY [LARGE SCALE ANALYSIS]</scope>
</reference>
<reference key="24">
    <citation type="journal article" date="2009" name="Cell">
        <title>A class of dynamin-like GTPases involved in the generation of the tubular ER network.</title>
        <authorList>
            <person name="Hu J."/>
            <person name="Shibata Y."/>
            <person name="Zhu P.-P."/>
            <person name="Voss C."/>
            <person name="Rismanchi N."/>
            <person name="Prinz W.A."/>
            <person name="Rapoport T.A."/>
            <person name="Blackstone C."/>
        </authorList>
    </citation>
    <scope>INTERACTION WITH ATL2</scope>
</reference>
<reference key="25">
    <citation type="journal article" date="2010" name="Sci. Signal.">
        <title>Quantitative phosphoproteomics reveals widespread full phosphorylation site occupancy during mitosis.</title>
        <authorList>
            <person name="Olsen J.V."/>
            <person name="Vermeulen M."/>
            <person name="Santamaria A."/>
            <person name="Kumar C."/>
            <person name="Miller M.L."/>
            <person name="Jensen L.J."/>
            <person name="Gnad F."/>
            <person name="Cox J."/>
            <person name="Jensen T.S."/>
            <person name="Nigg E.A."/>
            <person name="Brunak S."/>
            <person name="Mann M."/>
        </authorList>
    </citation>
    <scope>ACETYLATION [LARGE SCALE ANALYSIS] AT ALA-2</scope>
    <scope>CLEAVAGE OF INITIATOR METHIONINE [LARGE SCALE ANALYSIS]</scope>
    <scope>IDENTIFICATION BY MASS SPECTROMETRY [LARGE SCALE ANALYSIS]</scope>
    <source>
        <tissue>Cervix carcinoma</tissue>
    </source>
</reference>
<reference key="26">
    <citation type="journal article" date="2011" name="BMC Syst. Biol.">
        <title>Initial characterization of the human central proteome.</title>
        <authorList>
            <person name="Burkard T.R."/>
            <person name="Planyavsky M."/>
            <person name="Kaupe I."/>
            <person name="Breitwieser F.P."/>
            <person name="Buerckstuemmer T."/>
            <person name="Bennett K.L."/>
            <person name="Superti-Furga G."/>
            <person name="Colinge J."/>
        </authorList>
    </citation>
    <scope>IDENTIFICATION BY MASS SPECTROMETRY [LARGE SCALE ANALYSIS]</scope>
</reference>
<reference key="27">
    <citation type="journal article" date="2011" name="Mol. Biol. Cell">
        <title>Protrudin serves as an adaptor molecule that connects KIF5 and its cargoes in vesicular transport during process formation.</title>
        <authorList>
            <person name="Matsuzaki F."/>
            <person name="Shirane M."/>
            <person name="Matsumoto M."/>
            <person name="Nakayama K.I."/>
        </authorList>
    </citation>
    <scope>INTERACTION WITH ZFYVE27 AND KIF5A</scope>
</reference>
<reference key="28">
    <citation type="journal article" date="2011" name="Sci. Signal.">
        <title>System-wide temporal characterization of the proteome and phosphoproteome of human embryonic stem cell differentiation.</title>
        <authorList>
            <person name="Rigbolt K.T."/>
            <person name="Prokhorova T.A."/>
            <person name="Akimov V."/>
            <person name="Henningsen J."/>
            <person name="Johansen P.T."/>
            <person name="Kratchmarova I."/>
            <person name="Kassem M."/>
            <person name="Mann M."/>
            <person name="Olsen J.V."/>
            <person name="Blagoev B."/>
        </authorList>
    </citation>
    <scope>ACETYLATION [LARGE SCALE ANALYSIS] AT ALA-2</scope>
    <scope>CLEAVAGE OF INITIATOR METHIONINE [LARGE SCALE ANALYSIS]</scope>
    <scope>IDENTIFICATION BY MASS SPECTROMETRY [LARGE SCALE ANALYSIS]</scope>
</reference>
<reference key="29">
    <citation type="journal article" date="2012" name="Mol. Cell. Proteomics">
        <title>Comparative large-scale characterisation of plant vs. mammal proteins reveals similar and idiosyncratic N-alpha acetylation features.</title>
        <authorList>
            <person name="Bienvenut W.V."/>
            <person name="Sumpton D."/>
            <person name="Martinez A."/>
            <person name="Lilla S."/>
            <person name="Espagne C."/>
            <person name="Meinnel T."/>
            <person name="Giglione C."/>
        </authorList>
    </citation>
    <scope>ACETYLATION [LARGE SCALE ANALYSIS] AT ALA-2</scope>
    <scope>CLEAVAGE OF INITIATOR METHIONINE [LARGE SCALE ANALYSIS]</scope>
    <scope>IDENTIFICATION BY MASS SPECTROMETRY [LARGE SCALE ANALYSIS]</scope>
</reference>
<reference key="30">
    <citation type="journal article" date="2013" name="J. Proteome Res.">
        <title>Toward a comprehensive characterization of a human cancer cell phosphoproteome.</title>
        <authorList>
            <person name="Zhou H."/>
            <person name="Di Palma S."/>
            <person name="Preisinger C."/>
            <person name="Peng M."/>
            <person name="Polat A.N."/>
            <person name="Heck A.J."/>
            <person name="Mohammed S."/>
        </authorList>
    </citation>
    <scope>PHOSPHORYLATION [LARGE SCALE ANALYSIS] AT SER-30; SER-229; SER-246; SER-316 AND SER-453</scope>
    <scope>IDENTIFICATION BY MASS SPECTROMETRY [LARGE SCALE ANALYSIS]</scope>
    <source>
        <tissue>Cervix carcinoma</tissue>
        <tissue>Erythroleukemia</tissue>
    </source>
</reference>
<reference key="31">
    <citation type="journal article" date="2014" name="Biochem. J.">
        <title>Arl6IP1 has the ability to shape the mammalian ER membrane in a reticulon-like fashion.</title>
        <authorList>
            <person name="Yamamoto Y."/>
            <person name="Yoshida A."/>
            <person name="Miyazaki N."/>
            <person name="Iwasaki K."/>
            <person name="Sakisaka T."/>
        </authorList>
    </citation>
    <scope>SUBCELLULAR LOCATION</scope>
</reference>
<reference key="32">
    <citation type="journal article" date="2014" name="Kobe J. Med. Sci.">
        <title>Identification and characterization of TMEM33 as a reticulon-binding protein.</title>
        <authorList>
            <person name="Urade T."/>
            <person name="Yamamoto Y."/>
            <person name="Zhang X."/>
            <person name="Ku Y."/>
            <person name="Sakisaka T."/>
        </authorList>
    </citation>
    <scope>FUNCTION</scope>
</reference>
<reference key="33">
    <citation type="journal article" date="2015" name="Proteomics">
        <title>N-terminome analysis of the human mitochondrial proteome.</title>
        <authorList>
            <person name="Vaca Jacome A.S."/>
            <person name="Rabilloud T."/>
            <person name="Schaeffer-Reiss C."/>
            <person name="Rompais M."/>
            <person name="Ayoub D."/>
            <person name="Lane L."/>
            <person name="Bairoch A."/>
            <person name="Van Dorsselaer A."/>
            <person name="Carapito C."/>
        </authorList>
    </citation>
    <scope>IDENTIFICATION BY MASS SPECTROMETRY [LARGE SCALE ANALYSIS]</scope>
</reference>
<reference key="34">
    <citation type="journal article" date="2017" name="Cell Rep.">
        <title>The host protein reticulon 3.1A is utilized by flaviviruses to facilitate membrane remodelling.</title>
        <authorList>
            <person name="Aktepe T.E."/>
            <person name="Liebscher S."/>
            <person name="Prier J.E."/>
            <person name="Simmons C.P."/>
            <person name="Mackenzie J.M."/>
        </authorList>
    </citation>
    <scope>INTERACTION WITH WEST NILE VIRUS PROTEIN NS4A</scope>
    <scope>SUBCELLULAR LOCATION</scope>
</reference>
<reference key="35">
    <citation type="journal article" date="2021" name="Elife">
        <title>RTN3 inhibits RIG-I-mediated antiviral responses by impairing TRIM25-mediated K63-linked polyubiquitination.</title>
        <authorList>
            <person name="Yang Z."/>
            <person name="Wang J."/>
            <person name="He B."/>
            <person name="Zhang X."/>
            <person name="Li X."/>
            <person name="Kuang E."/>
        </authorList>
    </citation>
    <scope>FUNCTION</scope>
    <scope>INTERACTION WITH TRIM25 AND RIGI</scope>
    <scope>INDUCTION BY VIRAL INFECTION</scope>
    <scope>SUBCELLULAR LOCATION</scope>
</reference>
<reference evidence="32" key="36">
    <citation type="journal article" date="2020" name="Nat. Commun.">
        <title>Super-assembly of ER-phagy receptor Atg40 induces local ER remodeling at contacts with forming autophagosomal membranes.</title>
        <authorList>
            <person name="Mochida K."/>
            <person name="Yamasaki A."/>
            <person name="Matoba K."/>
            <person name="Kirisako H."/>
            <person name="Noda N.N."/>
            <person name="Nakatogawa H."/>
        </authorList>
    </citation>
    <scope>X-RAY CRYSTALLOGRAPHY (2.15 ANGSTROMS) OF 244-264 IN CHIMERIC CONSTRUCT WITH GABARAP</scope>
</reference>
<dbReference type="EMBL" id="AF059524">
    <property type="protein sequence ID" value="AAC99319.1"/>
    <property type="molecule type" value="mRNA"/>
</dbReference>
<dbReference type="EMBL" id="AF059529">
    <property type="protein sequence ID" value="AAD20951.1"/>
    <property type="molecule type" value="Genomic_DNA"/>
</dbReference>
<dbReference type="EMBL" id="AF059525">
    <property type="protein sequence ID" value="AAD20951.1"/>
    <property type="status" value="JOINED"/>
    <property type="molecule type" value="Genomic_DNA"/>
</dbReference>
<dbReference type="EMBL" id="AF059526">
    <property type="protein sequence ID" value="AAD20951.1"/>
    <property type="status" value="JOINED"/>
    <property type="molecule type" value="Genomic_DNA"/>
</dbReference>
<dbReference type="EMBL" id="AF059527">
    <property type="protein sequence ID" value="AAD20951.1"/>
    <property type="status" value="JOINED"/>
    <property type="molecule type" value="Genomic_DNA"/>
</dbReference>
<dbReference type="EMBL" id="AF059528">
    <property type="protein sequence ID" value="AAD20951.1"/>
    <property type="status" value="JOINED"/>
    <property type="molecule type" value="Genomic_DNA"/>
</dbReference>
<dbReference type="EMBL" id="AF119297">
    <property type="protein sequence ID" value="AAD26810.1"/>
    <property type="molecule type" value="mRNA"/>
</dbReference>
<dbReference type="EMBL" id="AY427821">
    <property type="protein sequence ID" value="AAR02474.1"/>
    <property type="molecule type" value="mRNA"/>
</dbReference>
<dbReference type="EMBL" id="AY750848">
    <property type="protein sequence ID" value="AAU81930.1"/>
    <property type="molecule type" value="mRNA"/>
</dbReference>
<dbReference type="EMBL" id="AP000753">
    <property type="status" value="NOT_ANNOTATED_CDS"/>
    <property type="molecule type" value="Genomic_DNA"/>
</dbReference>
<dbReference type="EMBL" id="AP006289">
    <property type="status" value="NOT_ANNOTATED_CDS"/>
    <property type="molecule type" value="Genomic_DNA"/>
</dbReference>
<dbReference type="EMBL" id="AK297529">
    <property type="protein sequence ID" value="BAH12606.1"/>
    <property type="molecule type" value="mRNA"/>
</dbReference>
<dbReference type="EMBL" id="AB209771">
    <property type="protein sequence ID" value="BAD93008.1"/>
    <property type="status" value="ALT_INIT"/>
    <property type="molecule type" value="mRNA"/>
</dbReference>
<dbReference type="EMBL" id="AK075412">
    <property type="protein sequence ID" value="BAG52134.1"/>
    <property type="molecule type" value="mRNA"/>
</dbReference>
<dbReference type="EMBL" id="AK222898">
    <property type="protein sequence ID" value="BAD96618.1"/>
    <property type="molecule type" value="mRNA"/>
</dbReference>
<dbReference type="EMBL" id="AK295361">
    <property type="protein sequence ID" value="BAH12044.1"/>
    <property type="molecule type" value="mRNA"/>
</dbReference>
<dbReference type="EMBL" id="CH471076">
    <property type="protein sequence ID" value="EAW74170.1"/>
    <property type="molecule type" value="Genomic_DNA"/>
</dbReference>
<dbReference type="EMBL" id="BC000634">
    <property type="protein sequence ID" value="AAH00634.1"/>
    <property type="molecule type" value="mRNA"/>
</dbReference>
<dbReference type="EMBL" id="BC010556">
    <property type="protein sequence ID" value="AAH10556.1"/>
    <property type="molecule type" value="mRNA"/>
</dbReference>
<dbReference type="EMBL" id="BC011394">
    <property type="protein sequence ID" value="AAH11394.1"/>
    <property type="molecule type" value="mRNA"/>
</dbReference>
<dbReference type="EMBL" id="BC022993">
    <property type="protein sequence ID" value="AAH22993.1"/>
    <property type="molecule type" value="mRNA"/>
</dbReference>
<dbReference type="EMBL" id="BC100822">
    <property type="protein sequence ID" value="AAI00823.1"/>
    <property type="molecule type" value="mRNA"/>
</dbReference>
<dbReference type="EMBL" id="BC100823">
    <property type="protein sequence ID" value="AAI00824.1"/>
    <property type="molecule type" value="mRNA"/>
</dbReference>
<dbReference type="EMBL" id="BC105981">
    <property type="protein sequence ID" value="AAI05982.1"/>
    <property type="molecule type" value="mRNA"/>
</dbReference>
<dbReference type="EMBL" id="BC105982">
    <property type="protein sequence ID" value="AAI05983.1"/>
    <property type="molecule type" value="mRNA"/>
</dbReference>
<dbReference type="EMBL" id="BC118628">
    <property type="protein sequence ID" value="AAI18629.1"/>
    <property type="molecule type" value="mRNA"/>
</dbReference>
<dbReference type="EMBL" id="BC118550">
    <property type="protein sequence ID" value="AAI18551.1"/>
    <property type="molecule type" value="mRNA"/>
</dbReference>
<dbReference type="EMBL" id="BK001685">
    <property type="protein sequence ID" value="DAA01931.1"/>
    <property type="molecule type" value="mRNA"/>
</dbReference>
<dbReference type="EMBL" id="BK001681">
    <property type="protein sequence ID" value="DAA01941.1"/>
    <property type="molecule type" value="mRNA"/>
</dbReference>
<dbReference type="EMBL" id="BK001684">
    <property type="protein sequence ID" value="DAA01943.1"/>
    <property type="molecule type" value="mRNA"/>
</dbReference>
<dbReference type="CCDS" id="CCDS41664.1">
    <molecule id="O95197-4"/>
</dbReference>
<dbReference type="CCDS" id="CCDS58141.1">
    <molecule id="O95197-1"/>
</dbReference>
<dbReference type="CCDS" id="CCDS58142.1">
    <molecule id="O95197-7"/>
</dbReference>
<dbReference type="CCDS" id="CCDS58143.1">
    <molecule id="O95197-6"/>
</dbReference>
<dbReference type="CCDS" id="CCDS8048.1">
    <molecule id="O95197-5"/>
</dbReference>
<dbReference type="CCDS" id="CCDS8049.1">
    <molecule id="O95197-3"/>
</dbReference>
<dbReference type="CCDS" id="CCDS8050.1">
    <molecule id="O95197-2"/>
</dbReference>
<dbReference type="RefSeq" id="NP_001252518.1">
    <molecule id="O95197-1"/>
    <property type="nucleotide sequence ID" value="NM_001265589.2"/>
</dbReference>
<dbReference type="RefSeq" id="NP_001252519.1">
    <molecule id="O95197-7"/>
    <property type="nucleotide sequence ID" value="NM_001265590.2"/>
</dbReference>
<dbReference type="RefSeq" id="NP_001252520.1">
    <molecule id="O95197-6"/>
    <property type="nucleotide sequence ID" value="NM_001265591.2"/>
</dbReference>
<dbReference type="RefSeq" id="NP_006045.1">
    <molecule id="O95197-3"/>
    <property type="nucleotide sequence ID" value="NM_006054.4"/>
</dbReference>
<dbReference type="RefSeq" id="NP_958831.1">
    <molecule id="O95197-2"/>
    <property type="nucleotide sequence ID" value="NM_201428.3"/>
</dbReference>
<dbReference type="RefSeq" id="NP_958832.1">
    <molecule id="O95197-4"/>
    <property type="nucleotide sequence ID" value="NM_201429.2"/>
</dbReference>
<dbReference type="RefSeq" id="NP_958833.1">
    <molecule id="O95197-5"/>
    <property type="nucleotide sequence ID" value="NM_201430.3"/>
</dbReference>
<dbReference type="PDB" id="7BRU">
    <property type="method" value="X-ray"/>
    <property type="resolution" value="2.15 A"/>
    <property type="chains" value="A/B/C=244-264"/>
</dbReference>
<dbReference type="PDBsum" id="7BRU"/>
<dbReference type="SMR" id="O95197"/>
<dbReference type="BioGRID" id="115598">
    <property type="interactions" value="180"/>
</dbReference>
<dbReference type="CORUM" id="O95197"/>
<dbReference type="FunCoup" id="O95197">
    <property type="interactions" value="317"/>
</dbReference>
<dbReference type="IntAct" id="O95197">
    <property type="interactions" value="99"/>
</dbReference>
<dbReference type="MINT" id="O95197"/>
<dbReference type="STRING" id="9606.ENSP00000367050"/>
<dbReference type="GlyCosmos" id="O95197">
    <property type="glycosylation" value="4 sites, 1 glycan"/>
</dbReference>
<dbReference type="GlyGen" id="O95197">
    <property type="glycosylation" value="7 sites, 1 O-linked glycan (6 sites)"/>
</dbReference>
<dbReference type="iPTMnet" id="O95197"/>
<dbReference type="PhosphoSitePlus" id="O95197"/>
<dbReference type="SwissPalm" id="O95197"/>
<dbReference type="BioMuta" id="RTN3"/>
<dbReference type="jPOST" id="O95197"/>
<dbReference type="MassIVE" id="O95197"/>
<dbReference type="PaxDb" id="9606-ENSP00000367050"/>
<dbReference type="PeptideAtlas" id="O95197"/>
<dbReference type="ProteomicsDB" id="27402"/>
<dbReference type="ProteomicsDB" id="50700">
    <molecule id="O95197-1"/>
</dbReference>
<dbReference type="ProteomicsDB" id="50701">
    <molecule id="O95197-2"/>
</dbReference>
<dbReference type="ProteomicsDB" id="50702">
    <molecule id="O95197-3"/>
</dbReference>
<dbReference type="ProteomicsDB" id="50703">
    <molecule id="O95197-4"/>
</dbReference>
<dbReference type="ProteomicsDB" id="50704">
    <molecule id="O95197-5"/>
</dbReference>
<dbReference type="ProteomicsDB" id="6613"/>
<dbReference type="Pumba" id="O95197"/>
<dbReference type="TopDownProteomics" id="O95197-2">
    <molecule id="O95197-2"/>
</dbReference>
<dbReference type="TopDownProteomics" id="O95197-3">
    <molecule id="O95197-3"/>
</dbReference>
<dbReference type="TopDownProteomics" id="O95197-4">
    <molecule id="O95197-4"/>
</dbReference>
<dbReference type="Antibodypedia" id="2923">
    <property type="antibodies" value="203 antibodies from 32 providers"/>
</dbReference>
<dbReference type="DNASU" id="10313"/>
<dbReference type="Ensembl" id="ENST00000339997.8">
    <molecule id="O95197-2"/>
    <property type="protein sequence ID" value="ENSP00000344106.4"/>
    <property type="gene ID" value="ENSG00000133318.14"/>
</dbReference>
<dbReference type="Ensembl" id="ENST00000341307.6">
    <molecule id="O95197-5"/>
    <property type="protein sequence ID" value="ENSP00000340903.2"/>
    <property type="gene ID" value="ENSG00000133318.14"/>
</dbReference>
<dbReference type="Ensembl" id="ENST00000354497.4">
    <molecule id="O95197-6"/>
    <property type="protein sequence ID" value="ENSP00000346492.4"/>
    <property type="gene ID" value="ENSG00000133318.14"/>
</dbReference>
<dbReference type="Ensembl" id="ENST00000356000.7">
    <molecule id="O95197-4"/>
    <property type="protein sequence ID" value="ENSP00000348279.3"/>
    <property type="gene ID" value="ENSG00000133318.14"/>
</dbReference>
<dbReference type="Ensembl" id="ENST00000377819.10">
    <molecule id="O95197-1"/>
    <property type="protein sequence ID" value="ENSP00000367050.5"/>
    <property type="gene ID" value="ENSG00000133318.14"/>
</dbReference>
<dbReference type="Ensembl" id="ENST00000537981.5">
    <molecule id="O95197-3"/>
    <property type="protein sequence ID" value="ENSP00000440874.1"/>
    <property type="gene ID" value="ENSG00000133318.14"/>
</dbReference>
<dbReference type="Ensembl" id="ENST00000540798.5">
    <molecule id="O95197-7"/>
    <property type="protein sequence ID" value="ENSP00000442733.1"/>
    <property type="gene ID" value="ENSG00000133318.14"/>
</dbReference>
<dbReference type="GeneID" id="10313"/>
<dbReference type="KEGG" id="hsa:10313"/>
<dbReference type="MANE-Select" id="ENST00000377819.10">
    <property type="protein sequence ID" value="ENSP00000367050.5"/>
    <property type="RefSeq nucleotide sequence ID" value="NM_001265589.2"/>
    <property type="RefSeq protein sequence ID" value="NP_001252518.1"/>
</dbReference>
<dbReference type="UCSC" id="uc001nxm.3">
    <molecule id="O95197-1"/>
    <property type="organism name" value="human"/>
</dbReference>
<dbReference type="AGR" id="HGNC:10469"/>
<dbReference type="CTD" id="10313"/>
<dbReference type="DisGeNET" id="10313"/>
<dbReference type="GeneCards" id="RTN3"/>
<dbReference type="HGNC" id="HGNC:10469">
    <property type="gene designation" value="RTN3"/>
</dbReference>
<dbReference type="HPA" id="ENSG00000133318">
    <property type="expression patterns" value="Tissue enhanced (brain)"/>
</dbReference>
<dbReference type="MIM" id="604249">
    <property type="type" value="gene"/>
</dbReference>
<dbReference type="neXtProt" id="NX_O95197"/>
<dbReference type="OpenTargets" id="ENSG00000133318"/>
<dbReference type="PharmGKB" id="PA34882"/>
<dbReference type="VEuPathDB" id="HostDB:ENSG00000133318"/>
<dbReference type="eggNOG" id="KOG1792">
    <property type="taxonomic scope" value="Eukaryota"/>
</dbReference>
<dbReference type="GeneTree" id="ENSGT00940000157482"/>
<dbReference type="HOGENOM" id="CLU_048580_1_0_1"/>
<dbReference type="InParanoid" id="O95197"/>
<dbReference type="OMA" id="TLWYLFE"/>
<dbReference type="OrthoDB" id="567788at2759"/>
<dbReference type="PAN-GO" id="O95197">
    <property type="GO annotations" value="6 GO annotations based on evolutionary models"/>
</dbReference>
<dbReference type="PhylomeDB" id="O95197"/>
<dbReference type="TreeFam" id="TF105431"/>
<dbReference type="PathwayCommons" id="O95197"/>
<dbReference type="Reactome" id="R-HSA-8849932">
    <property type="pathway name" value="Synaptic adhesion-like molecules"/>
</dbReference>
<dbReference type="SignaLink" id="O95197"/>
<dbReference type="BioGRID-ORCS" id="10313">
    <property type="hits" value="38 hits in 1158 CRISPR screens"/>
</dbReference>
<dbReference type="CD-CODE" id="FB4E32DD">
    <property type="entry name" value="Presynaptic clusters and postsynaptic densities"/>
</dbReference>
<dbReference type="ChiTaRS" id="RTN3">
    <property type="organism name" value="human"/>
</dbReference>
<dbReference type="GeneWiki" id="RTN3"/>
<dbReference type="GenomeRNAi" id="10313"/>
<dbReference type="Pharos" id="O95197">
    <property type="development level" value="Tbio"/>
</dbReference>
<dbReference type="PRO" id="PR:O95197"/>
<dbReference type="Proteomes" id="UP000005640">
    <property type="component" value="Chromosome 11"/>
</dbReference>
<dbReference type="RNAct" id="O95197">
    <property type="molecule type" value="protein"/>
</dbReference>
<dbReference type="Bgee" id="ENSG00000133318">
    <property type="expression patterns" value="Expressed in Brodmann (1909) area 9 and 190 other cell types or tissues"/>
</dbReference>
<dbReference type="ExpressionAtlas" id="O95197">
    <property type="expression patterns" value="baseline and differential"/>
</dbReference>
<dbReference type="GO" id="GO:0005783">
    <property type="term" value="C:endoplasmic reticulum"/>
    <property type="evidence" value="ECO:0000314"/>
    <property type="project" value="HPA"/>
</dbReference>
<dbReference type="GO" id="GO:0005789">
    <property type="term" value="C:endoplasmic reticulum membrane"/>
    <property type="evidence" value="ECO:0000314"/>
    <property type="project" value="UniProtKB"/>
</dbReference>
<dbReference type="GO" id="GO:0005615">
    <property type="term" value="C:extracellular space"/>
    <property type="evidence" value="ECO:0000304"/>
    <property type="project" value="ProtInc"/>
</dbReference>
<dbReference type="GO" id="GO:0005794">
    <property type="term" value="C:Golgi apparatus"/>
    <property type="evidence" value="ECO:0000314"/>
    <property type="project" value="UniProtKB"/>
</dbReference>
<dbReference type="GO" id="GO:0000139">
    <property type="term" value="C:Golgi membrane"/>
    <property type="evidence" value="ECO:0007669"/>
    <property type="project" value="UniProtKB-SubCell"/>
</dbReference>
<dbReference type="GO" id="GO:0043005">
    <property type="term" value="C:neuron projection"/>
    <property type="evidence" value="ECO:0000318"/>
    <property type="project" value="GO_Central"/>
</dbReference>
<dbReference type="GO" id="GO:0005886">
    <property type="term" value="C:plasma membrane"/>
    <property type="evidence" value="ECO:0000304"/>
    <property type="project" value="Reactome"/>
</dbReference>
<dbReference type="GO" id="GO:0014069">
    <property type="term" value="C:postsynaptic density"/>
    <property type="evidence" value="ECO:0000318"/>
    <property type="project" value="GO_Central"/>
</dbReference>
<dbReference type="GO" id="GO:0006915">
    <property type="term" value="P:apoptotic process"/>
    <property type="evidence" value="ECO:0007669"/>
    <property type="project" value="UniProtKB-KW"/>
</dbReference>
<dbReference type="GO" id="GO:0007420">
    <property type="term" value="P:brain development"/>
    <property type="evidence" value="ECO:0000318"/>
    <property type="project" value="GO_Central"/>
</dbReference>
<dbReference type="GO" id="GO:0071787">
    <property type="term" value="P:endoplasmic reticulum tubular network formation"/>
    <property type="evidence" value="ECO:0000314"/>
    <property type="project" value="UniProtKB"/>
</dbReference>
<dbReference type="GO" id="GO:0071786">
    <property type="term" value="P:endoplasmic reticulum tubular network organization"/>
    <property type="evidence" value="ECO:0000315"/>
    <property type="project" value="UniProtKB"/>
</dbReference>
<dbReference type="GO" id="GO:1902430">
    <property type="term" value="P:negative regulation of amyloid-beta formation"/>
    <property type="evidence" value="ECO:0000314"/>
    <property type="project" value="UniProtKB"/>
</dbReference>
<dbReference type="GO" id="GO:0030182">
    <property type="term" value="P:neuron differentiation"/>
    <property type="evidence" value="ECO:0000318"/>
    <property type="project" value="GO_Central"/>
</dbReference>
<dbReference type="GO" id="GO:0016192">
    <property type="term" value="P:vesicle-mediated transport"/>
    <property type="evidence" value="ECO:0007669"/>
    <property type="project" value="UniProtKB-KW"/>
</dbReference>
<dbReference type="FunFam" id="1.20.5.2480:FF:000001">
    <property type="entry name" value="Reticulon"/>
    <property type="match status" value="1"/>
</dbReference>
<dbReference type="Gene3D" id="1.20.5.2480">
    <property type="match status" value="1"/>
</dbReference>
<dbReference type="InterPro" id="IPR003388">
    <property type="entry name" value="Reticulon"/>
</dbReference>
<dbReference type="InterPro" id="IPR046964">
    <property type="entry name" value="RTN1-4"/>
</dbReference>
<dbReference type="PANTHER" id="PTHR45799:SF4">
    <property type="entry name" value="RETICULON-3"/>
    <property type="match status" value="1"/>
</dbReference>
<dbReference type="PANTHER" id="PTHR45799">
    <property type="entry name" value="RETICULON-LIKE PROTEIN"/>
    <property type="match status" value="1"/>
</dbReference>
<dbReference type="Pfam" id="PF02453">
    <property type="entry name" value="Reticulon"/>
    <property type="match status" value="1"/>
</dbReference>
<dbReference type="PROSITE" id="PS50845">
    <property type="entry name" value="RETICULON"/>
    <property type="match status" value="1"/>
</dbReference>
<name>RTN3_HUMAN</name>
<evidence type="ECO:0000250" key="1">
    <source>
        <dbReference type="UniProtKB" id="Q6RJR6"/>
    </source>
</evidence>
<evidence type="ECO:0000250" key="2">
    <source>
        <dbReference type="UniProtKB" id="Q9ES97"/>
    </source>
</evidence>
<evidence type="ECO:0000255" key="3"/>
<evidence type="ECO:0000255" key="4">
    <source>
        <dbReference type="PROSITE-ProRule" id="PRU00170"/>
    </source>
</evidence>
<evidence type="ECO:0000256" key="5">
    <source>
        <dbReference type="SAM" id="MobiDB-lite"/>
    </source>
</evidence>
<evidence type="ECO:0000269" key="6">
    <source>
    </source>
</evidence>
<evidence type="ECO:0000269" key="7">
    <source>
    </source>
</evidence>
<evidence type="ECO:0000269" key="8">
    <source>
    </source>
</evidence>
<evidence type="ECO:0000269" key="9">
    <source>
    </source>
</evidence>
<evidence type="ECO:0000269" key="10">
    <source>
    </source>
</evidence>
<evidence type="ECO:0000269" key="11">
    <source>
    </source>
</evidence>
<evidence type="ECO:0000269" key="12">
    <source>
    </source>
</evidence>
<evidence type="ECO:0000269" key="13">
    <source>
    </source>
</evidence>
<evidence type="ECO:0000269" key="14">
    <source>
    </source>
</evidence>
<evidence type="ECO:0000269" key="15">
    <source>
    </source>
</evidence>
<evidence type="ECO:0000269" key="16">
    <source>
    </source>
</evidence>
<evidence type="ECO:0000269" key="17">
    <source>
    </source>
</evidence>
<evidence type="ECO:0000269" key="18">
    <source>
    </source>
</evidence>
<evidence type="ECO:0000269" key="19">
    <source>
    </source>
</evidence>
<evidence type="ECO:0000269" key="20">
    <source>
    </source>
</evidence>
<evidence type="ECO:0000269" key="21">
    <source>
    </source>
</evidence>
<evidence type="ECO:0000269" key="22">
    <source>
    </source>
</evidence>
<evidence type="ECO:0000303" key="23">
    <source>
    </source>
</evidence>
<evidence type="ECO:0000303" key="24">
    <source>
    </source>
</evidence>
<evidence type="ECO:0000303" key="25">
    <source>
    </source>
</evidence>
<evidence type="ECO:0000303" key="26">
    <source>
    </source>
</evidence>
<evidence type="ECO:0000303" key="27">
    <source>
    </source>
</evidence>
<evidence type="ECO:0000303" key="28">
    <source>
    </source>
</evidence>
<evidence type="ECO:0000303" key="29">
    <source>
    </source>
</evidence>
<evidence type="ECO:0000303" key="30">
    <source ref="6"/>
</evidence>
<evidence type="ECO:0000305" key="31"/>
<evidence type="ECO:0007744" key="32">
    <source>
        <dbReference type="PDB" id="7BRU"/>
    </source>
</evidence>
<evidence type="ECO:0007744" key="33">
    <source>
    </source>
</evidence>
<evidence type="ECO:0007744" key="34">
    <source>
    </source>
</evidence>
<evidence type="ECO:0007744" key="35">
    <source>
    </source>
</evidence>
<evidence type="ECO:0007744" key="36">
    <source>
    </source>
</evidence>
<evidence type="ECO:0007744" key="37">
    <source>
    </source>
</evidence>
<evidence type="ECO:0007744" key="38">
    <source>
    </source>
</evidence>
<evidence type="ECO:0007829" key="39">
    <source>
        <dbReference type="PDB" id="7BRU"/>
    </source>
</evidence>
<accession>O95197</accession>
<accession>B3KQS2</accession>
<accession>B7Z308</accession>
<accession>B7Z4M0</accession>
<accession>F5H774</accession>
<accession>Q147U9</accession>
<accession>Q496K2</accession>
<accession>Q53GN3</accession>
<accession>Q59EP0</accession>
<accession>Q5UEP2</accession>
<accession>Q6T930</accession>
<accession>Q7RTM7</accession>
<accession>Q7RTM8</accession>
<accession>Q7RTN3</accession>
<organism>
    <name type="scientific">Homo sapiens</name>
    <name type="common">Human</name>
    <dbReference type="NCBI Taxonomy" id="9606"/>
    <lineage>
        <taxon>Eukaryota</taxon>
        <taxon>Metazoa</taxon>
        <taxon>Chordata</taxon>
        <taxon>Craniata</taxon>
        <taxon>Vertebrata</taxon>
        <taxon>Euteleostomi</taxon>
        <taxon>Mammalia</taxon>
        <taxon>Eutheria</taxon>
        <taxon>Euarchontoglires</taxon>
        <taxon>Primates</taxon>
        <taxon>Haplorrhini</taxon>
        <taxon>Catarrhini</taxon>
        <taxon>Hominidae</taxon>
        <taxon>Homo</taxon>
    </lineage>
</organism>
<comment type="function">
    <text evidence="9 11 14 16 20">May be involved in membrane trafficking in the early secretory pathway. Inhibits BACE1 activity and amyloid precursor protein processing. May induce caspase-8 cascade and apoptosis. May favor BCL2 translocation to the mitochondria upon endoplasmic reticulum stress. Induces the formation of endoplasmic reticulum tubules (PubMed:25612671). Also acts as an inflammation-resolving regulator by interacting with both TRIM25 and RIGI, subsequently impairing RIGI 'Lys-63'-linked polyubiquitination leading to IRF3 and NF-kappa-B inhibition.</text>
</comment>
<comment type="function">
    <text evidence="15">(Microbial infection) Plays a positive role in viral replication and pathogenesis of enteroviruses.</text>
</comment>
<comment type="subunit">
    <text evidence="2 7 9 12 13 14 16 17 18 22">Homodimer. Interacts with ATL1 (By similarity). Interacts with RTN4. Isoform 3 interacts with BACE1, BACE2, BCL2 and FADD. Interacts with ATL2. Interacts with TMEM33 (By similarity). Interacts with ZFYVE27 and with KIF5A in a ZFYVE27-dependent manner (PubMed:21976701). Interacts with RIGI (PubMed:34313226). Interacts with TRIM25 (PubMed:34313226).</text>
</comment>
<comment type="subunit">
    <text evidence="15 21">(Microbial infection) Interacts with Coxsackievirus A16, enterovirus 71 and poliovirus P2C proteins (PubMed:17182608).</text>
</comment>
<comment type="subunit">
    <text evidence="21">(Microbial infection) Interacts with West Nile virus protein NS4A.</text>
</comment>
<comment type="interaction">
    <interactant intactId="EBI-740467">
        <id>O95197</id>
    </interactant>
    <interactant intactId="EBI-358858">
        <id>O14735</id>
        <label>CDIPT</label>
    </interactant>
    <organismsDiffer>false</organismsDiffer>
    <experiments>3</experiments>
</comment>
<comment type="interaction">
    <interactant intactId="EBI-740467">
        <id>O95197</id>
    </interactant>
    <interactant intactId="EBI-739994">
        <id>Q9Y5P4</id>
        <label>CERT1</label>
    </interactant>
    <organismsDiffer>false</organismsDiffer>
    <experiments>3</experiments>
</comment>
<comment type="interaction">
    <interactant intactId="EBI-740467">
        <id>O95197</id>
    </interactant>
    <interactant intactId="EBI-2561661">
        <id>Q969Q6</id>
        <label>PPP2R3C</label>
    </interactant>
    <organismsDiffer>false</organismsDiffer>
    <experiments>3</experiments>
</comment>
<comment type="interaction">
    <interactant intactId="EBI-740467">
        <id>O95197</id>
    </interactant>
    <interactant intactId="EBI-742898">
        <id>P43378</id>
        <label>PTPN9</label>
    </interactant>
    <organismsDiffer>false</organismsDiffer>
    <experiments>5</experiments>
</comment>
<comment type="interaction">
    <interactant intactId="EBI-740467">
        <id>O95197</id>
    </interactant>
    <interactant intactId="EBI-10250413">
        <id>Q6IQ43</id>
        <label>PTPN9</label>
    </interactant>
    <organismsDiffer>false</organismsDiffer>
    <experiments>3</experiments>
</comment>
<comment type="interaction">
    <interactant intactId="EBI-740467">
        <id>O95197</id>
    </interactant>
    <interactant intactId="EBI-715945">
        <id>Q9NQC3</id>
        <label>RTN4</label>
    </interactant>
    <organismsDiffer>false</organismsDiffer>
    <experiments>4</experiments>
</comment>
<comment type="interaction">
    <interactant intactId="EBI-740467">
        <id>O95197</id>
    </interactant>
    <interactant intactId="EBI-2822329">
        <id>Q13596</id>
        <label>SNX1</label>
    </interactant>
    <organismsDiffer>false</organismsDiffer>
    <experiments>3</experiments>
</comment>
<comment type="interaction">
    <interactant intactId="EBI-740467">
        <id>O95197</id>
    </interactant>
    <interactant intactId="EBI-710997">
        <id>P54274</id>
        <label>TERF1</label>
    </interactant>
    <organismsDiffer>false</organismsDiffer>
    <experiments>2</experiments>
</comment>
<comment type="interaction">
    <interactant intactId="EBI-11525735">
        <id>O95197-3</id>
    </interactant>
    <interactant intactId="EBI-2433297">
        <id>P56817-1</id>
        <label>BACE1</label>
    </interactant>
    <organismsDiffer>false</organismsDiffer>
    <experiments>2</experiments>
</comment>
<comment type="interaction">
    <interactant intactId="EBI-11525735">
        <id>O95197-3</id>
    </interactant>
    <interactant intactId="EBI-13345167">
        <id>Q8TDT2</id>
        <label>GPR152</label>
    </interactant>
    <organismsDiffer>false</organismsDiffer>
    <experiments>3</experiments>
</comment>
<comment type="interaction">
    <interactant intactId="EBI-11525735">
        <id>O95197-3</id>
    </interactant>
    <interactant intactId="EBI-2691489">
        <id>Q8WV92</id>
        <label>MITD1</label>
    </interactant>
    <organismsDiffer>false</organismsDiffer>
    <experiments>3</experiments>
</comment>
<comment type="interaction">
    <interactant intactId="EBI-11525735">
        <id>O95197-3</id>
    </interactant>
    <interactant intactId="EBI-11978907">
        <id>Q9ULP0-2</id>
        <label>NDRG4</label>
    </interactant>
    <organismsDiffer>false</organismsDiffer>
    <experiments>3</experiments>
</comment>
<comment type="interaction">
    <interactant intactId="EBI-11525735">
        <id>O95197-3</id>
    </interactant>
    <interactant intactId="EBI-692836">
        <id>P26678</id>
        <label>PLN</label>
    </interactant>
    <organismsDiffer>false</organismsDiffer>
    <experiments>3</experiments>
</comment>
<comment type="interaction">
    <interactant intactId="EBI-11525735">
        <id>O95197-3</id>
    </interactant>
    <interactant intactId="EBI-742898">
        <id>P43378</id>
        <label>PTPN9</label>
    </interactant>
    <organismsDiffer>false</organismsDiffer>
    <experiments>3</experiments>
</comment>
<comment type="interaction">
    <interactant intactId="EBI-11525735">
        <id>O95197-3</id>
    </interactant>
    <interactant intactId="EBI-2806908">
        <id>Q96LZ7</id>
        <label>RMDN2</label>
    </interactant>
    <organismsDiffer>false</organismsDiffer>
    <experiments>3</experiments>
</comment>
<comment type="interaction">
    <interactant intactId="EBI-11525735">
        <id>O95197-3</id>
    </interactant>
    <interactant intactId="EBI-17721653">
        <id>Q9NQC3-5</id>
        <label>RTN4</label>
    </interactant>
    <organismsDiffer>false</organismsDiffer>
    <experiments>3</experiments>
</comment>
<comment type="interaction">
    <interactant intactId="EBI-11525735">
        <id>O95197-3</id>
    </interactant>
    <interactant intactId="EBI-3917235">
        <id>Q9NTJ5</id>
        <label>SACM1L</label>
    </interactant>
    <organismsDiffer>false</organismsDiffer>
    <experiments>3</experiments>
</comment>
<comment type="interaction">
    <interactant intactId="EBI-11525735">
        <id>O95197-3</id>
    </interactant>
    <interactant intactId="EBI-10294651">
        <id>Q99726</id>
        <label>SLC30A3</label>
    </interactant>
    <organismsDiffer>false</organismsDiffer>
    <experiments>3</experiments>
</comment>
<comment type="interaction">
    <interactant intactId="EBI-11525735">
        <id>O95197-3</id>
    </interactant>
    <interactant intactId="EBI-10262251">
        <id>Q8IWU4</id>
        <label>SLC30A8</label>
    </interactant>
    <organismsDiffer>false</organismsDiffer>
    <experiments>3</experiments>
</comment>
<comment type="subcellular location">
    <subcellularLocation>
        <location evidence="7 9 11 13 14 15 16 19 21 22">Endoplasmic reticulum membrane</location>
        <topology evidence="3">Multi-pass membrane protein</topology>
    </subcellularLocation>
    <subcellularLocation>
        <location evidence="9 11 13 21">Golgi apparatus membrane</location>
        <topology evidence="3">Multi-pass membrane protein</topology>
    </subcellularLocation>
</comment>
<comment type="alternative products">
    <event type="alternative splicing"/>
    <isoform>
        <id>O95197-1</id>
        <name>1</name>
        <name>A1</name>
        <name>A4b</name>
        <sequence type="displayed"/>
    </isoform>
    <isoform>
        <id>O95197-2</id>
        <name>2</name>
        <name>A2</name>
        <name>A3b</name>
        <sequence type="described" ref="VSP_023759"/>
    </isoform>
    <isoform>
        <id>O95197-3</id>
        <name>3</name>
        <name>B1</name>
        <name>A1</name>
        <sequence type="described" ref="VSP_023759 VSP_023760"/>
    </isoform>
    <isoform>
        <id>O95197-4</id>
        <name>4</name>
        <name>B2</name>
        <name>A2</name>
        <sequence type="described" ref="VSP_023760"/>
    </isoform>
    <isoform>
        <id>O95197-5</id>
        <name>5</name>
        <sequence type="described" ref="VSP_023759 VSP_023760 VSP_023761"/>
    </isoform>
    <isoform>
        <id>O95197-6</id>
        <name>6</name>
        <sequence type="described" ref="VSP_045319 VSP_045320"/>
    </isoform>
    <isoform>
        <id>O95197-7</id>
        <name>7</name>
        <sequence type="described" ref="VSP_047008"/>
    </isoform>
</comment>
<comment type="tissue specificity">
    <text evidence="6 7 8 9 10">Isoform 3 is widely expressed, with highest levels in brain, where it is enriched in neuronal cell bodies from gray matter (at protein level). Three times more abundant in macula than in peripheral retina. Isoform 1 is expressed at high levels in brain and at low levels in skeletal muscle. Isoform 2 is only found in melanoma.</text>
</comment>
<comment type="induction">
    <text evidence="16 22">By endoplasmic reticulum stress (at protein level) (PubMed:17191123). Up-regulated and self-aggregates upon RNA viral infection (PubMed:34313226).</text>
</comment>
<comment type="sequence caution" evidence="31">
    <conflict type="erroneous initiation">
        <sequence resource="EMBL-CDS" id="BAD93008"/>
    </conflict>
    <text>Extended N-terminus.</text>
</comment>
<gene>
    <name type="primary">RTN3</name>
    <name type="synonym">ASYIP</name>
    <name type="synonym">NSPL2</name>
</gene>
<protein>
    <recommendedName>
        <fullName>Reticulon-3</fullName>
    </recommendedName>
    <alternativeName>
        <fullName>Homolog of ASY protein</fullName>
        <shortName>HAP</shortName>
    </alternativeName>
    <alternativeName>
        <fullName>Neuroendocrine-specific protein-like 2</fullName>
        <shortName>NSP-like protein 2</shortName>
    </alternativeName>
    <alternativeName>
        <fullName>Neuroendocrine-specific protein-like II</fullName>
        <shortName>NSP-like protein II</shortName>
        <shortName>NSPLII</shortName>
    </alternativeName>
</protein>
<sequence>MAEPSAATQSHSISSSSFGAEPSAPGGGGSPGACPALGTKSCSSSCADSFVSSSSSQPVSLFSTSQEGLSSLCSDEPSSEIMTSSFLSSSEIHNTGLTILHGEKSHVLGSQPILAKEGKDHLDLLDMKKMEKPQGTSNNVSDSSVSLAAGVHCDRPSIPASFPEHPAFLSKKIGQVEEQIDKETKNPNGVSSREAKTALDADDRFTLLTAQKPPTEYSKVEGIYTYSLSPSKVSGDDVIEKDSPESPFEVIIDKAAFDKEFKDSYKESTDDFGSWSVHTDKESSEDISETNDKLFPLRNKEAGRYPMSALLSRQFSHTNAALEEVSRCVNDMHNFTNEILTWDLVPQVKQQTDKSSDCITKTTGLDMSEYNSEIPVVNLKTSTHQKTPVCSIDGSTPITKSTGDWAEASLQQENAITGKPVPDSLNSTKEFSIKGVQGNMQKQDDTLAELPGSPPEKCDSLGSGVATVKVVLPDDHLKDEMDWQSSALGEITEADSSGESDDTVIEDITADTSFENNKIQAEKPVSIPSAVVKTGEREIKEIPSCEREEKTSKNFEELVSDSELHQDQPDILGRSPASEAACSKVPDTNVSLEDVSEVAPEKPITTENPKLPSTVSPNVFNETEFSLNVTTSAYLESLHGKNVKHIDDSSPEDLIAAFTETRDKGIVDSERNAFKAISEKMTDFKTTPPVEVLHENESGGSEIKDIGSKYSEQSKETNGSEPLGVFPTQGTPVASLDLEQEQLTIKALKELGERQVEKSTSAQRDAELPSEEVLKQTFTFAPESWPQRSYDILERNVKNGSDLGISQKPITIRETTRVDAVSSLSKTELVKKHVLARLLTDFSVHDLIFWRDVKKTGFVFGTTLIMLLSLAAFSVISVVSYLILALLSVTISFRIYKSVIQAVQKSEEGHPFKAYLDVDITLSSEAFHNYMNAAMVHINRALKLIIRLFLVEDLVDSLKLAVFMWLMTYVGAVFNGITLLILAELLIFSVPIVYEKYKTQIDHYVGIARDQTKSIVEKIQAKLPGIAKKKAE</sequence>